<sequence>MKDDFAEEEEVHSFGYKRFGIQEGTQCTKCKNNWALKLSIILLYILCALLTITVAILGYKVVEKMDNVTGGMETSRQTYDDKLTAVESDLKKLGDQTGKKALSTNSELSTFRSDILDLRQQLREITEKTSKNKDTLEKLQASGDALVDRQSQLKETLENNSFLITTVNKTLQAYNGYVTNLQQDTSVLQGNLQSQMYSHNVVIMNLNNLNLTQVQQRNLITNLQRSVDDTSQAIQRIKNDFQNLQQVFLQAKKDTDWLKEKVQSLQTLAANNSALAKANNDTLEDMNSQLSSFTGQMDNITTASQANEQNLKDLQDVHRDAENRTAAKFSQLEERFQLFESDIVNIISNISYTAHYLRTLTSNLNEVRTTCTDTLTKHTDDLTSLNNTLANIRLDSVSLRMQQDLMRSRLDTEVANLSVIMEEMKLVDSKHGQLIKNFTILQGPPGPRGPKGDRGQQGPPGPTGNKGQKGEKGEPGPPGPAGERGPIGPVGPPGERGSKGSKGLQGSKGSRGSPGKPGPQGPSGDPGPPGPPGKDGLPGPQGPPGFQGLQGTVGEPGVPGPRGLPGLPGMPGMPGIKGPPGPPGPSGAAVPLALKTEPTTAPEDNGCLPYWKNFTDKCYYFSTERDFFEDAKLFCERMSSHLVFINTGEEQQWIKNQMVAKQNYWIGLTDLEQENEWRWLDGTLLEYKNWKAGQPDNWGHGHGPGEDCAGLINFGQWNDFPCEDMNHFICEKDRERELAITL</sequence>
<comment type="function">
    <text evidence="1">Scavenger receptor that displays several functions associated with host defense. Promotes binding and phagocytosis of Gram-positive, Gram-negative bacteria and yeast. Mediates the recognition, internalization and degradation of oxidatively modified low density lipoprotein (oxLDL) by vascular endothelial cells. Binds to several carbohydrates including Gal-type ligands, D-galactose, L- and D-fucose, GalNAc, T and Tn antigens in a calcium-dependent manner and internalizes specifically GalNAc in nurse-like cells. Also binds to sialyl Lewis X or a trisaccharide and asialo-orosomucoid (ASOR) (By similarity).</text>
</comment>
<comment type="subunit">
    <text evidence="1">The extracellular domain forms a stable trimer. The extracellular domain interacts with fibrillar amyloid-beta peptide (By similarity).</text>
</comment>
<comment type="subcellular location">
    <subcellularLocation>
        <location evidence="1">Membrane</location>
        <topology evidence="1">Single-pass type II membrane protein</topology>
    </subcellularLocation>
    <text evidence="1">Forms clusters on the cell surface.</text>
</comment>
<organism>
    <name type="scientific">Bos taurus</name>
    <name type="common">Bovine</name>
    <dbReference type="NCBI Taxonomy" id="9913"/>
    <lineage>
        <taxon>Eukaryota</taxon>
        <taxon>Metazoa</taxon>
        <taxon>Chordata</taxon>
        <taxon>Craniata</taxon>
        <taxon>Vertebrata</taxon>
        <taxon>Euteleostomi</taxon>
        <taxon>Mammalia</taxon>
        <taxon>Eutheria</taxon>
        <taxon>Laurasiatheria</taxon>
        <taxon>Artiodactyla</taxon>
        <taxon>Ruminantia</taxon>
        <taxon>Pecora</taxon>
        <taxon>Bovidae</taxon>
        <taxon>Bovinae</taxon>
        <taxon>Bos</taxon>
    </lineage>
</organism>
<feature type="chain" id="PRO_0000318680" description="Collectin-12">
    <location>
        <begin position="1"/>
        <end position="742"/>
    </location>
</feature>
<feature type="topological domain" description="Cytoplasmic" evidence="2">
    <location>
        <begin position="1"/>
        <end position="37"/>
    </location>
</feature>
<feature type="transmembrane region" description="Helical; Signal-anchor for type II membrane protein" evidence="2">
    <location>
        <begin position="38"/>
        <end position="58"/>
    </location>
</feature>
<feature type="topological domain" description="Extracellular" evidence="2">
    <location>
        <begin position="59"/>
        <end position="742"/>
    </location>
</feature>
<feature type="domain" description="Collagen-like 1">
    <location>
        <begin position="443"/>
        <end position="502"/>
    </location>
</feature>
<feature type="domain" description="Collagen-like 2">
    <location>
        <begin position="527"/>
        <end position="586"/>
    </location>
</feature>
<feature type="domain" description="C-type lectin" evidence="3">
    <location>
        <begin position="614"/>
        <end position="731"/>
    </location>
</feature>
<feature type="region of interest" description="Disordered" evidence="4">
    <location>
        <begin position="439"/>
        <end position="591"/>
    </location>
</feature>
<feature type="coiled-coil region" evidence="2">
    <location>
        <begin position="73"/>
        <end position="141"/>
    </location>
</feature>
<feature type="coiled-coil region" evidence="2">
    <location>
        <begin position="215"/>
        <end position="254"/>
    </location>
</feature>
<feature type="coiled-coil region" evidence="2">
    <location>
        <begin position="296"/>
        <end position="328"/>
    </location>
</feature>
<feature type="compositionally biased region" description="Low complexity" evidence="4">
    <location>
        <begin position="501"/>
        <end position="514"/>
    </location>
</feature>
<feature type="compositionally biased region" description="Pro residues" evidence="4">
    <location>
        <begin position="516"/>
        <end position="532"/>
    </location>
</feature>
<feature type="compositionally biased region" description="Low complexity" evidence="4">
    <location>
        <begin position="534"/>
        <end position="556"/>
    </location>
</feature>
<feature type="binding site" evidence="1">
    <location>
        <position position="644"/>
    </location>
    <ligand>
        <name>Ca(2+)</name>
        <dbReference type="ChEBI" id="CHEBI:29108"/>
        <label>1</label>
    </ligand>
</feature>
<feature type="binding site" evidence="1">
    <location>
        <position position="646"/>
    </location>
    <ligand>
        <name>Ca(2+)</name>
        <dbReference type="ChEBI" id="CHEBI:29108"/>
        <label>1</label>
    </ligand>
</feature>
<feature type="binding site" evidence="1">
    <location>
        <position position="650"/>
    </location>
    <ligand>
        <name>Ca(2+)</name>
        <dbReference type="ChEBI" id="CHEBI:29108"/>
        <label>1</label>
    </ligand>
</feature>
<feature type="binding site" evidence="1">
    <location>
        <position position="670"/>
    </location>
    <ligand>
        <name>Ca(2+)</name>
        <dbReference type="ChEBI" id="CHEBI:29108"/>
        <label>2</label>
    </ligand>
</feature>
<feature type="binding site" evidence="1">
    <location>
        <position position="674"/>
    </location>
    <ligand>
        <name>Ca(2+)</name>
        <dbReference type="ChEBI" id="CHEBI:29108"/>
        <label>2</label>
    </ligand>
</feature>
<feature type="binding site" evidence="1">
    <location>
        <position position="691"/>
    </location>
    <ligand>
        <name>a carbohydrate</name>
        <dbReference type="ChEBI" id="CHEBI:16646"/>
    </ligand>
</feature>
<feature type="binding site" evidence="1">
    <location>
        <position position="694"/>
    </location>
    <ligand>
        <name>a carbohydrate</name>
        <dbReference type="ChEBI" id="CHEBI:16646"/>
    </ligand>
</feature>
<feature type="binding site" evidence="1">
    <location>
        <position position="694"/>
    </location>
    <ligand>
        <name>Ca(2+)</name>
        <dbReference type="ChEBI" id="CHEBI:29108"/>
        <label>3</label>
    </ligand>
</feature>
<feature type="binding site" evidence="1">
    <location>
        <position position="696"/>
    </location>
    <ligand>
        <name>a carbohydrate</name>
        <dbReference type="ChEBI" id="CHEBI:16646"/>
    </ligand>
</feature>
<feature type="binding site" evidence="1">
    <location>
        <position position="696"/>
    </location>
    <ligand>
        <name>Ca(2+)</name>
        <dbReference type="ChEBI" id="CHEBI:29108"/>
        <label>3</label>
    </ligand>
</feature>
<feature type="binding site" evidence="1">
    <location>
        <position position="697"/>
    </location>
    <ligand>
        <name>Ca(2+)</name>
        <dbReference type="ChEBI" id="CHEBI:29108"/>
        <label>2</label>
    </ligand>
</feature>
<feature type="binding site" evidence="1">
    <location>
        <position position="706"/>
    </location>
    <ligand>
        <name>a carbohydrate</name>
        <dbReference type="ChEBI" id="CHEBI:16646"/>
    </ligand>
</feature>
<feature type="binding site" evidence="1">
    <location>
        <position position="706"/>
    </location>
    <ligand>
        <name>Ca(2+)</name>
        <dbReference type="ChEBI" id="CHEBI:29108"/>
        <label>2</label>
    </ligand>
</feature>
<feature type="binding site" evidence="1">
    <location>
        <position position="706"/>
    </location>
    <ligand>
        <name>Ca(2+)</name>
        <dbReference type="ChEBI" id="CHEBI:29108"/>
        <label>3</label>
    </ligand>
</feature>
<feature type="binding site" evidence="1">
    <location>
        <position position="707"/>
    </location>
    <ligand>
        <name>Ca(2+)</name>
        <dbReference type="ChEBI" id="CHEBI:29108"/>
        <label>2</label>
    </ligand>
</feature>
<feature type="binding site" evidence="1">
    <location>
        <position position="718"/>
    </location>
    <ligand>
        <name>a carbohydrate</name>
        <dbReference type="ChEBI" id="CHEBI:16646"/>
    </ligand>
</feature>
<feature type="binding site" evidence="1">
    <location>
        <position position="718"/>
    </location>
    <ligand>
        <name>Ca(2+)</name>
        <dbReference type="ChEBI" id="CHEBI:29108"/>
        <label>3</label>
    </ligand>
</feature>
<feature type="binding site" evidence="1">
    <location>
        <position position="719"/>
    </location>
    <ligand>
        <name>a carbohydrate</name>
        <dbReference type="ChEBI" id="CHEBI:16646"/>
    </ligand>
</feature>
<feature type="binding site" evidence="1">
    <location>
        <position position="719"/>
    </location>
    <ligand>
        <name>Ca(2+)</name>
        <dbReference type="ChEBI" id="CHEBI:29108"/>
        <label>3</label>
    </ligand>
</feature>
<feature type="binding site" evidence="1">
    <location>
        <position position="731"/>
    </location>
    <ligand>
        <name>Ca(2+)</name>
        <dbReference type="ChEBI" id="CHEBI:29108"/>
        <label>1</label>
    </ligand>
</feature>
<feature type="glycosylation site" description="N-linked (GlcNAc...) asparagine" evidence="2">
    <location>
        <position position="67"/>
    </location>
</feature>
<feature type="glycosylation site" description="N-linked (GlcNAc...) asparagine" evidence="2">
    <location>
        <position position="159"/>
    </location>
</feature>
<feature type="glycosylation site" description="N-linked (GlcNAc...) asparagine" evidence="2">
    <location>
        <position position="168"/>
    </location>
</feature>
<feature type="glycosylation site" description="N-linked (GlcNAc...) asparagine" evidence="2">
    <location>
        <position position="271"/>
    </location>
</feature>
<feature type="disulfide bond" evidence="3">
    <location>
        <begin position="607"/>
        <end position="618"/>
    </location>
</feature>
<feature type="disulfide bond" evidence="3">
    <location>
        <begin position="635"/>
        <end position="730"/>
    </location>
</feature>
<feature type="disulfide bond" evidence="3">
    <location>
        <begin position="708"/>
        <end position="722"/>
    </location>
</feature>
<dbReference type="EMBL" id="BC149193">
    <property type="protein sequence ID" value="AAI49194.1"/>
    <property type="molecule type" value="mRNA"/>
</dbReference>
<dbReference type="RefSeq" id="NP_001095313.1">
    <property type="nucleotide sequence ID" value="NM_001101843.1"/>
</dbReference>
<dbReference type="SMR" id="A6QP79"/>
<dbReference type="FunCoup" id="A6QP79">
    <property type="interactions" value="453"/>
</dbReference>
<dbReference type="STRING" id="9913.ENSBTAP00000044662"/>
<dbReference type="GlyCosmos" id="A6QP79">
    <property type="glycosylation" value="4 sites, No reported glycans"/>
</dbReference>
<dbReference type="GlyGen" id="A6QP79">
    <property type="glycosylation" value="4 sites"/>
</dbReference>
<dbReference type="PaxDb" id="9913-ENSBTAP00000044662"/>
<dbReference type="Ensembl" id="ENSBTAT00000047455.4">
    <property type="protein sequence ID" value="ENSBTAP00000044662.3"/>
    <property type="gene ID" value="ENSBTAG00000007705.7"/>
</dbReference>
<dbReference type="GeneID" id="504741"/>
<dbReference type="KEGG" id="bta:504741"/>
<dbReference type="CTD" id="81035"/>
<dbReference type="VEuPathDB" id="HostDB:ENSBTAG00000007705"/>
<dbReference type="VGNC" id="VGNC:27579">
    <property type="gene designation" value="COLEC12"/>
</dbReference>
<dbReference type="eggNOG" id="ENOG502QQKQ">
    <property type="taxonomic scope" value="Eukaryota"/>
</dbReference>
<dbReference type="GeneTree" id="ENSGT00950000183074"/>
<dbReference type="HOGENOM" id="CLU_022132_0_0_1"/>
<dbReference type="InParanoid" id="A6QP79"/>
<dbReference type="OMA" id="EANKFCK"/>
<dbReference type="OrthoDB" id="9896688at2759"/>
<dbReference type="TreeFam" id="TF332426"/>
<dbReference type="Reactome" id="R-BTA-198933">
    <property type="pathway name" value="Immunoregulatory interactions between a Lymphoid and a non-Lymphoid cell"/>
</dbReference>
<dbReference type="Reactome" id="R-BTA-3000480">
    <property type="pathway name" value="Scavenging by Class A Receptors"/>
</dbReference>
<dbReference type="Proteomes" id="UP000009136">
    <property type="component" value="Chromosome 24"/>
</dbReference>
<dbReference type="Bgee" id="ENSBTAG00000007705">
    <property type="expression patterns" value="Expressed in anterior segment of eyeball and 102 other cell types or tissues"/>
</dbReference>
<dbReference type="GO" id="GO:0005581">
    <property type="term" value="C:collagen trimer"/>
    <property type="evidence" value="ECO:0007669"/>
    <property type="project" value="UniProtKB-KW"/>
</dbReference>
<dbReference type="GO" id="GO:0062023">
    <property type="term" value="C:collagen-containing extracellular matrix"/>
    <property type="evidence" value="ECO:0000318"/>
    <property type="project" value="GO_Central"/>
</dbReference>
<dbReference type="GO" id="GO:0005615">
    <property type="term" value="C:extracellular space"/>
    <property type="evidence" value="ECO:0000318"/>
    <property type="project" value="GO_Central"/>
</dbReference>
<dbReference type="GO" id="GO:0016020">
    <property type="term" value="C:membrane"/>
    <property type="evidence" value="ECO:0007669"/>
    <property type="project" value="UniProtKB-SubCell"/>
</dbReference>
<dbReference type="GO" id="GO:0030246">
    <property type="term" value="F:carbohydrate binding"/>
    <property type="evidence" value="ECO:0007669"/>
    <property type="project" value="UniProtKB-KW"/>
</dbReference>
<dbReference type="GO" id="GO:0030169">
    <property type="term" value="F:low-density lipoprotein particle binding"/>
    <property type="evidence" value="ECO:0000250"/>
    <property type="project" value="UniProtKB"/>
</dbReference>
<dbReference type="GO" id="GO:0046872">
    <property type="term" value="F:metal ion binding"/>
    <property type="evidence" value="ECO:0007669"/>
    <property type="project" value="UniProtKB-KW"/>
</dbReference>
<dbReference type="GO" id="GO:0038187">
    <property type="term" value="F:pattern recognition receptor activity"/>
    <property type="evidence" value="ECO:0000250"/>
    <property type="project" value="UniProtKB"/>
</dbReference>
<dbReference type="GO" id="GO:0006910">
    <property type="term" value="P:phagocytosis, recognition"/>
    <property type="evidence" value="ECO:0000250"/>
    <property type="project" value="UniProtKB"/>
</dbReference>
<dbReference type="CDD" id="cd03590">
    <property type="entry name" value="CLECT_DC-SIGN_like"/>
    <property type="match status" value="1"/>
</dbReference>
<dbReference type="FunFam" id="3.10.100.10:FF:000017">
    <property type="entry name" value="collectin-12 isoform X1"/>
    <property type="match status" value="1"/>
</dbReference>
<dbReference type="Gene3D" id="3.10.100.10">
    <property type="entry name" value="Mannose-Binding Protein A, subunit A"/>
    <property type="match status" value="1"/>
</dbReference>
<dbReference type="InterPro" id="IPR001304">
    <property type="entry name" value="C-type_lectin-like"/>
</dbReference>
<dbReference type="InterPro" id="IPR016186">
    <property type="entry name" value="C-type_lectin-like/link_sf"/>
</dbReference>
<dbReference type="InterPro" id="IPR050111">
    <property type="entry name" value="C-type_lectin/snaclec_domain"/>
</dbReference>
<dbReference type="InterPro" id="IPR018378">
    <property type="entry name" value="C-type_lectin_CS"/>
</dbReference>
<dbReference type="InterPro" id="IPR033989">
    <property type="entry name" value="CD209-like_CTLD"/>
</dbReference>
<dbReference type="InterPro" id="IPR008160">
    <property type="entry name" value="Collagen"/>
</dbReference>
<dbReference type="InterPro" id="IPR016187">
    <property type="entry name" value="CTDL_fold"/>
</dbReference>
<dbReference type="PANTHER" id="PTHR22803">
    <property type="entry name" value="MANNOSE, PHOSPHOLIPASE, LECTIN RECEPTOR RELATED"/>
    <property type="match status" value="1"/>
</dbReference>
<dbReference type="Pfam" id="PF01391">
    <property type="entry name" value="Collagen"/>
    <property type="match status" value="3"/>
</dbReference>
<dbReference type="Pfam" id="PF00059">
    <property type="entry name" value="Lectin_C"/>
    <property type="match status" value="1"/>
</dbReference>
<dbReference type="SMART" id="SM00034">
    <property type="entry name" value="CLECT"/>
    <property type="match status" value="1"/>
</dbReference>
<dbReference type="SUPFAM" id="SSF56436">
    <property type="entry name" value="C-type lectin-like"/>
    <property type="match status" value="1"/>
</dbReference>
<dbReference type="PROSITE" id="PS00615">
    <property type="entry name" value="C_TYPE_LECTIN_1"/>
    <property type="match status" value="1"/>
</dbReference>
<dbReference type="PROSITE" id="PS50041">
    <property type="entry name" value="C_TYPE_LECTIN_2"/>
    <property type="match status" value="1"/>
</dbReference>
<accession>A6QP79</accession>
<proteinExistence type="evidence at transcript level"/>
<name>COL12_BOVIN</name>
<gene>
    <name type="primary">COLEC12</name>
    <name type="synonym">CLP1</name>
</gene>
<protein>
    <recommendedName>
        <fullName>Collectin-12</fullName>
    </recommendedName>
    <alternativeName>
        <fullName>Collectin placenta protein 1</fullName>
        <shortName>CL-P1</shortName>
    </alternativeName>
</protein>
<evidence type="ECO:0000250" key="1"/>
<evidence type="ECO:0000255" key="2"/>
<evidence type="ECO:0000255" key="3">
    <source>
        <dbReference type="PROSITE-ProRule" id="PRU00040"/>
    </source>
</evidence>
<evidence type="ECO:0000256" key="4">
    <source>
        <dbReference type="SAM" id="MobiDB-lite"/>
    </source>
</evidence>
<reference key="1">
    <citation type="submission" date="2007-08" db="EMBL/GenBank/DDBJ databases">
        <authorList>
            <consortium name="NIH - Mammalian Gene Collection (MGC) project"/>
        </authorList>
    </citation>
    <scope>NUCLEOTIDE SEQUENCE [LARGE SCALE MRNA]</scope>
    <source>
        <strain>Hereford</strain>
        <tissue>Fetal muscle</tissue>
    </source>
</reference>
<keyword id="KW-0106">Calcium</keyword>
<keyword id="KW-0175">Coiled coil</keyword>
<keyword id="KW-0176">Collagen</keyword>
<keyword id="KW-1015">Disulfide bond</keyword>
<keyword id="KW-0325">Glycoprotein</keyword>
<keyword id="KW-0430">Lectin</keyword>
<keyword id="KW-0472">Membrane</keyword>
<keyword id="KW-0479">Metal-binding</keyword>
<keyword id="KW-0675">Receptor</keyword>
<keyword id="KW-1185">Reference proteome</keyword>
<keyword id="KW-0677">Repeat</keyword>
<keyword id="KW-0735">Signal-anchor</keyword>
<keyword id="KW-0812">Transmembrane</keyword>
<keyword id="KW-1133">Transmembrane helix</keyword>